<proteinExistence type="evidence at protein level"/>
<organism>
    <name type="scientific">Homo sapiens</name>
    <name type="common">Human</name>
    <dbReference type="NCBI Taxonomy" id="9606"/>
    <lineage>
        <taxon>Eukaryota</taxon>
        <taxon>Metazoa</taxon>
        <taxon>Chordata</taxon>
        <taxon>Craniata</taxon>
        <taxon>Vertebrata</taxon>
        <taxon>Euteleostomi</taxon>
        <taxon>Mammalia</taxon>
        <taxon>Eutheria</taxon>
        <taxon>Euarchontoglires</taxon>
        <taxon>Primates</taxon>
        <taxon>Haplorrhini</taxon>
        <taxon>Catarrhini</taxon>
        <taxon>Hominidae</taxon>
        <taxon>Homo</taxon>
    </lineage>
</organism>
<protein>
    <recommendedName>
        <fullName>Ras-related protein Rab-32</fullName>
        <ecNumber evidence="3 6">3.6.5.2</ecNumber>
    </recommendedName>
</protein>
<keyword id="KW-0002">3D-structure</keyword>
<keyword id="KW-0007">Acetylation</keyword>
<keyword id="KW-0968">Cytoplasmic vesicle</keyword>
<keyword id="KW-0903">Direct protein sequencing</keyword>
<keyword id="KW-0225">Disease variant</keyword>
<keyword id="KW-0342">GTP-binding</keyword>
<keyword id="KW-0378">Hydrolase</keyword>
<keyword id="KW-0449">Lipoprotein</keyword>
<keyword id="KW-0472">Membrane</keyword>
<keyword id="KW-0496">Mitochondrion</keyword>
<keyword id="KW-1000">Mitochondrion outer membrane</keyword>
<keyword id="KW-0547">Nucleotide-binding</keyword>
<keyword id="KW-0907">Parkinson disease</keyword>
<keyword id="KW-0908">Parkinsonism</keyword>
<keyword id="KW-0597">Phosphoprotein</keyword>
<keyword id="KW-0636">Prenylation</keyword>
<keyword id="KW-1267">Proteomics identification</keyword>
<keyword id="KW-1185">Reference proteome</keyword>
<name>RAB32_HUMAN</name>
<evidence type="ECO:0000250" key="1"/>
<evidence type="ECO:0000250" key="2">
    <source>
        <dbReference type="UniProtKB" id="Q9CZE3"/>
    </source>
</evidence>
<evidence type="ECO:0000269" key="3">
    <source>
    </source>
</evidence>
<evidence type="ECO:0000269" key="4">
    <source>
    </source>
</evidence>
<evidence type="ECO:0000269" key="5">
    <source>
    </source>
</evidence>
<evidence type="ECO:0000269" key="6">
    <source>
    </source>
</evidence>
<evidence type="ECO:0000269" key="7">
    <source>
    </source>
</evidence>
<evidence type="ECO:0000269" key="8">
    <source>
    </source>
</evidence>
<evidence type="ECO:0000269" key="9">
    <source>
    </source>
</evidence>
<evidence type="ECO:0000269" key="10">
    <source>
    </source>
</evidence>
<evidence type="ECO:0000269" key="11">
    <source>
    </source>
</evidence>
<evidence type="ECO:0000269" key="12">
    <source>
    </source>
</evidence>
<evidence type="ECO:0000269" key="13">
    <source ref="7"/>
</evidence>
<evidence type="ECO:0000305" key="14"/>
<evidence type="ECO:0000305" key="15">
    <source>
    </source>
</evidence>
<evidence type="ECO:0000305" key="16">
    <source>
    </source>
</evidence>
<evidence type="ECO:0000305" key="17">
    <source>
    </source>
</evidence>
<evidence type="ECO:0000305" key="18">
    <source>
    </source>
</evidence>
<evidence type="ECO:0000312" key="19">
    <source>
        <dbReference type="HGNC" id="HGNC:9772"/>
    </source>
</evidence>
<evidence type="ECO:0007744" key="20">
    <source>
        <dbReference type="PDB" id="4CYM"/>
    </source>
</evidence>
<evidence type="ECO:0007744" key="21">
    <source>
        <dbReference type="PDB" id="4CZ2"/>
    </source>
</evidence>
<evidence type="ECO:0007744" key="22">
    <source>
    </source>
</evidence>
<evidence type="ECO:0007744" key="23">
    <source>
    </source>
</evidence>
<evidence type="ECO:0007829" key="24">
    <source>
        <dbReference type="PDB" id="6FF8"/>
    </source>
</evidence>
<reference key="1">
    <citation type="submission" date="1996-10" db="EMBL/GenBank/DDBJ databases">
        <title>Cloning of novel Rab proteins with the yeast two-hybrid system.</title>
        <authorList>
            <person name="Burke S."/>
            <person name="Seabra M.C."/>
        </authorList>
    </citation>
    <scope>NUCLEOTIDE SEQUENCE [MRNA]</scope>
</reference>
<reference key="2">
    <citation type="journal article" date="2002" name="Eur. J. Biochem.">
        <title>Molecular cloning, bacterial expression and properties of Rab31 and Rab32.</title>
        <authorList>
            <person name="Bao X."/>
            <person name="Faris A.E."/>
            <person name="Jang E.K."/>
            <person name="Haslam R.J."/>
        </authorList>
    </citation>
    <scope>NUCLEOTIDE SEQUENCE [MRNA] OF 16-225</scope>
    <scope>TISSUE SPECIFICITY</scope>
    <scope>MUTAGENESIS OF GLN-85</scope>
    <scope>FUNCTION</scope>
    <scope>CATALYTIC ACTIVITY</scope>
    <source>
        <tissue>Platelet</tissue>
    </source>
</reference>
<reference key="3">
    <citation type="submission" date="2002-04" db="EMBL/GenBank/DDBJ databases">
        <title>cDNA clones of human proteins involved in signal transduction sequenced by the Guthrie cDNA resource center (www.cdna.org).</title>
        <authorList>
            <person name="Puhl H.L. III"/>
            <person name="Ikeda S.R."/>
            <person name="Aronstam R.S."/>
        </authorList>
    </citation>
    <scope>NUCLEOTIDE SEQUENCE [LARGE SCALE MRNA]</scope>
    <source>
        <tissue>Brain</tissue>
    </source>
</reference>
<reference key="4">
    <citation type="submission" date="2004-10" db="EMBL/GenBank/DDBJ databases">
        <title>Cloning of human full-length CDSs in BD Creator(TM) system donor vector.</title>
        <authorList>
            <person name="Kalnine N."/>
            <person name="Chen X."/>
            <person name="Rolfs A."/>
            <person name="Halleck A."/>
            <person name="Hines L."/>
            <person name="Eisenstein S."/>
            <person name="Koundinya M."/>
            <person name="Raphael J."/>
            <person name="Moreira D."/>
            <person name="Kelley T."/>
            <person name="LaBaer J."/>
            <person name="Lin Y."/>
            <person name="Phelan M."/>
            <person name="Farmer A."/>
        </authorList>
    </citation>
    <scope>NUCLEOTIDE SEQUENCE [LARGE SCALE MRNA]</scope>
</reference>
<reference key="5">
    <citation type="journal article" date="2003" name="Nature">
        <title>The DNA sequence and analysis of human chromosome 6.</title>
        <authorList>
            <person name="Mungall A.J."/>
            <person name="Palmer S.A."/>
            <person name="Sims S.K."/>
            <person name="Edwards C.A."/>
            <person name="Ashurst J.L."/>
            <person name="Wilming L."/>
            <person name="Jones M.C."/>
            <person name="Horton R."/>
            <person name="Hunt S.E."/>
            <person name="Scott C.E."/>
            <person name="Gilbert J.G.R."/>
            <person name="Clamp M.E."/>
            <person name="Bethel G."/>
            <person name="Milne S."/>
            <person name="Ainscough R."/>
            <person name="Almeida J.P."/>
            <person name="Ambrose K.D."/>
            <person name="Andrews T.D."/>
            <person name="Ashwell R.I.S."/>
            <person name="Babbage A.K."/>
            <person name="Bagguley C.L."/>
            <person name="Bailey J."/>
            <person name="Banerjee R."/>
            <person name="Barker D.J."/>
            <person name="Barlow K.F."/>
            <person name="Bates K."/>
            <person name="Beare D.M."/>
            <person name="Beasley H."/>
            <person name="Beasley O."/>
            <person name="Bird C.P."/>
            <person name="Blakey S.E."/>
            <person name="Bray-Allen S."/>
            <person name="Brook J."/>
            <person name="Brown A.J."/>
            <person name="Brown J.Y."/>
            <person name="Burford D.C."/>
            <person name="Burrill W."/>
            <person name="Burton J."/>
            <person name="Carder C."/>
            <person name="Carter N.P."/>
            <person name="Chapman J.C."/>
            <person name="Clark S.Y."/>
            <person name="Clark G."/>
            <person name="Clee C.M."/>
            <person name="Clegg S."/>
            <person name="Cobley V."/>
            <person name="Collier R.E."/>
            <person name="Collins J.E."/>
            <person name="Colman L.K."/>
            <person name="Corby N.R."/>
            <person name="Coville G.J."/>
            <person name="Culley K.M."/>
            <person name="Dhami P."/>
            <person name="Davies J."/>
            <person name="Dunn M."/>
            <person name="Earthrowl M.E."/>
            <person name="Ellington A.E."/>
            <person name="Evans K.A."/>
            <person name="Faulkner L."/>
            <person name="Francis M.D."/>
            <person name="Frankish A."/>
            <person name="Frankland J."/>
            <person name="French L."/>
            <person name="Garner P."/>
            <person name="Garnett J."/>
            <person name="Ghori M.J."/>
            <person name="Gilby L.M."/>
            <person name="Gillson C.J."/>
            <person name="Glithero R.J."/>
            <person name="Grafham D.V."/>
            <person name="Grant M."/>
            <person name="Gribble S."/>
            <person name="Griffiths C."/>
            <person name="Griffiths M.N.D."/>
            <person name="Hall R."/>
            <person name="Halls K.S."/>
            <person name="Hammond S."/>
            <person name="Harley J.L."/>
            <person name="Hart E.A."/>
            <person name="Heath P.D."/>
            <person name="Heathcott R."/>
            <person name="Holmes S.J."/>
            <person name="Howden P.J."/>
            <person name="Howe K.L."/>
            <person name="Howell G.R."/>
            <person name="Huckle E."/>
            <person name="Humphray S.J."/>
            <person name="Humphries M.D."/>
            <person name="Hunt A.R."/>
            <person name="Johnson C.M."/>
            <person name="Joy A.A."/>
            <person name="Kay M."/>
            <person name="Keenan S.J."/>
            <person name="Kimberley A.M."/>
            <person name="King A."/>
            <person name="Laird G.K."/>
            <person name="Langford C."/>
            <person name="Lawlor S."/>
            <person name="Leongamornlert D.A."/>
            <person name="Leversha M."/>
            <person name="Lloyd C.R."/>
            <person name="Lloyd D.M."/>
            <person name="Loveland J.E."/>
            <person name="Lovell J."/>
            <person name="Martin S."/>
            <person name="Mashreghi-Mohammadi M."/>
            <person name="Maslen G.L."/>
            <person name="Matthews L."/>
            <person name="McCann O.T."/>
            <person name="McLaren S.J."/>
            <person name="McLay K."/>
            <person name="McMurray A."/>
            <person name="Moore M.J.F."/>
            <person name="Mullikin J.C."/>
            <person name="Niblett D."/>
            <person name="Nickerson T."/>
            <person name="Novik K.L."/>
            <person name="Oliver K."/>
            <person name="Overton-Larty E.K."/>
            <person name="Parker A."/>
            <person name="Patel R."/>
            <person name="Pearce A.V."/>
            <person name="Peck A.I."/>
            <person name="Phillimore B.J.C.T."/>
            <person name="Phillips S."/>
            <person name="Plumb R.W."/>
            <person name="Porter K.M."/>
            <person name="Ramsey Y."/>
            <person name="Ranby S.A."/>
            <person name="Rice C.M."/>
            <person name="Ross M.T."/>
            <person name="Searle S.M."/>
            <person name="Sehra H.K."/>
            <person name="Sheridan E."/>
            <person name="Skuce C.D."/>
            <person name="Smith S."/>
            <person name="Smith M."/>
            <person name="Spraggon L."/>
            <person name="Squares S.L."/>
            <person name="Steward C.A."/>
            <person name="Sycamore N."/>
            <person name="Tamlyn-Hall G."/>
            <person name="Tester J."/>
            <person name="Theaker A.J."/>
            <person name="Thomas D.W."/>
            <person name="Thorpe A."/>
            <person name="Tracey A."/>
            <person name="Tromans A."/>
            <person name="Tubby B."/>
            <person name="Wall M."/>
            <person name="Wallis J.M."/>
            <person name="West A.P."/>
            <person name="White S.S."/>
            <person name="Whitehead S.L."/>
            <person name="Whittaker H."/>
            <person name="Wild A."/>
            <person name="Willey D.J."/>
            <person name="Wilmer T.E."/>
            <person name="Wood J.M."/>
            <person name="Wray P.W."/>
            <person name="Wyatt J.C."/>
            <person name="Young L."/>
            <person name="Younger R.M."/>
            <person name="Bentley D.R."/>
            <person name="Coulson A."/>
            <person name="Durbin R.M."/>
            <person name="Hubbard T."/>
            <person name="Sulston J.E."/>
            <person name="Dunham I."/>
            <person name="Rogers J."/>
            <person name="Beck S."/>
        </authorList>
    </citation>
    <scope>NUCLEOTIDE SEQUENCE [LARGE SCALE GENOMIC DNA]</scope>
</reference>
<reference key="6">
    <citation type="journal article" date="2004" name="Genome Res.">
        <title>The status, quality, and expansion of the NIH full-length cDNA project: the Mammalian Gene Collection (MGC).</title>
        <authorList>
            <consortium name="The MGC Project Team"/>
        </authorList>
    </citation>
    <scope>NUCLEOTIDE SEQUENCE [LARGE SCALE MRNA]</scope>
    <source>
        <tissue>Brain</tissue>
    </source>
</reference>
<reference key="7">
    <citation type="submission" date="2005-11" db="UniProtKB">
        <authorList>
            <person name="Bienvenut W.V."/>
            <person name="Claeys D."/>
        </authorList>
    </citation>
    <scope>PROTEIN SEQUENCE OF 2-22; 28-38; 66-72; 77-87; 111-119; 128-144; 164-186 AND 211-217</scope>
    <scope>CLEAVAGE OF INITIATOR METHIONINE</scope>
    <scope>ACETYLATION AT ALA-2</scope>
    <scope>IDENTIFICATION BY MASS SPECTROMETRY</scope>
    <source>
        <tissue>Platelet</tissue>
    </source>
</reference>
<reference key="8">
    <citation type="journal article" date="2002" name="J. Cell Biol.">
        <title>Rab32 is an A-kinase anchoring protein and participates in mitochondrial dynamics.</title>
        <authorList>
            <person name="Alto N.M."/>
            <person name="Soderling J."/>
            <person name="Scott J.D."/>
        </authorList>
    </citation>
    <scope>FUNCTION</scope>
    <scope>SUBCELLULAR LOCATION</scope>
    <scope>TISSUE SPECIFICITY</scope>
    <scope>MUTAGENESIS OF THR-39; ALA-185 AND LEU-188</scope>
</reference>
<reference key="9">
    <citation type="journal article" date="2008" name="Mol. Cell">
        <title>Kinase-selective enrichment enables quantitative phosphoproteomics of the kinome across the cell cycle.</title>
        <authorList>
            <person name="Daub H."/>
            <person name="Olsen J.V."/>
            <person name="Bairlein M."/>
            <person name="Gnad F."/>
            <person name="Oppermann F.S."/>
            <person name="Korner R."/>
            <person name="Greff Z."/>
            <person name="Keri G."/>
            <person name="Stemmann O."/>
            <person name="Mann M."/>
        </authorList>
    </citation>
    <scope>IDENTIFICATION BY MASS SPECTROMETRY [LARGE SCALE ANALYSIS]</scope>
    <source>
        <tissue>Cervix carcinoma</tissue>
    </source>
</reference>
<reference key="10">
    <citation type="journal article" date="2008" name="Proc. Natl. Acad. Sci. U.S.A.">
        <title>A quantitative atlas of mitotic phosphorylation.</title>
        <authorList>
            <person name="Dephoure N."/>
            <person name="Zhou C."/>
            <person name="Villen J."/>
            <person name="Beausoleil S.A."/>
            <person name="Bakalarski C.E."/>
            <person name="Elledge S.J."/>
            <person name="Gygi S.P."/>
        </authorList>
    </citation>
    <scope>IDENTIFICATION BY MASS SPECTROMETRY [LARGE SCALE ANALYSIS]</scope>
    <source>
        <tissue>Cervix carcinoma</tissue>
    </source>
</reference>
<reference key="11">
    <citation type="journal article" date="2011" name="BMC Syst. Biol.">
        <title>Initial characterization of the human central proteome.</title>
        <authorList>
            <person name="Burkard T.R."/>
            <person name="Planyavsky M."/>
            <person name="Kaupe I."/>
            <person name="Breitwieser F.P."/>
            <person name="Buerckstuemmer T."/>
            <person name="Bennett K.L."/>
            <person name="Superti-Furga G."/>
            <person name="Colinge J."/>
        </authorList>
    </citation>
    <scope>IDENTIFICATION BY MASS SPECTROMETRY [LARGE SCALE ANALYSIS]</scope>
</reference>
<reference key="12">
    <citation type="journal article" date="2011" name="J. Biol. Chem.">
        <title>RUTBC1 protein, a Rab9A effector that activates GTP hydrolysis by Rab32 and Rab33B proteins.</title>
        <authorList>
            <person name="Nottingham R.M."/>
            <person name="Ganley I.G."/>
            <person name="Barr F.A."/>
            <person name="Lambright D.G."/>
            <person name="Pfeffer S.R."/>
        </authorList>
    </citation>
    <scope>INTERACTION WITH ANKRD27</scope>
    <scope>FUNCTION</scope>
    <scope>CATALYTIC ACTIVITY</scope>
    <scope>ACTIVITY REGULATION</scope>
</reference>
<reference key="13">
    <citation type="journal article" date="2011" name="Traffic">
        <title>Rab GTPases regulating phagosome maturation are differentially recruited to mycobacterial phagosomes.</title>
        <authorList>
            <person name="Seto S."/>
            <person name="Tsujimura K."/>
            <person name="Koide Y."/>
        </authorList>
    </citation>
    <scope>FUNCTION</scope>
    <scope>SUBCELLULAR LOCATION</scope>
</reference>
<reference key="14">
    <citation type="journal article" date="2012" name="Curr. Biol.">
        <title>BLOC-3 mutated in Hermansky-Pudlak syndrome is a Rab32/38 guanine nucleotide exchange factor.</title>
        <authorList>
            <person name="Gerondopoulos A."/>
            <person name="Langemeyer L."/>
            <person name="Liang J.R."/>
            <person name="Linford A."/>
            <person name="Barr F.A."/>
        </authorList>
    </citation>
    <scope>FUNCTION</scope>
    <scope>ACTIVITY REGULATION</scope>
    <scope>SUBCELLULAR LOCATION</scope>
</reference>
<reference key="15">
    <citation type="journal article" date="2012" name="Mol. Cell. Proteomics">
        <title>Comparative large-scale characterisation of plant vs. mammal proteins reveals similar and idiosyncratic N-alpha acetylation features.</title>
        <authorList>
            <person name="Bienvenut W.V."/>
            <person name="Sumpton D."/>
            <person name="Martinez A."/>
            <person name="Lilla S."/>
            <person name="Espagne C."/>
            <person name="Meinnel T."/>
            <person name="Giglione C."/>
        </authorList>
    </citation>
    <scope>ACETYLATION [LARGE SCALE ANALYSIS] AT ALA-2</scope>
    <scope>CLEAVAGE OF INITIATOR METHIONINE [LARGE SCALE ANALYSIS]</scope>
    <scope>IDENTIFICATION BY MASS SPECTROMETRY [LARGE SCALE ANALYSIS]</scope>
</reference>
<reference key="16">
    <citation type="journal article" date="2012" name="Proc. Natl. Acad. Sci. U.S.A.">
        <title>N-terminal acetylome analyses and functional insights of the N-terminal acetyltransferase NatB.</title>
        <authorList>
            <person name="Van Damme P."/>
            <person name="Lasa M."/>
            <person name="Polevoda B."/>
            <person name="Gazquez C."/>
            <person name="Elosegui-Artola A."/>
            <person name="Kim D.S."/>
            <person name="De Juan-Pardo E."/>
            <person name="Demeyer K."/>
            <person name="Hole K."/>
            <person name="Larrea E."/>
            <person name="Timmerman E."/>
            <person name="Prieto J."/>
            <person name="Arnesen T."/>
            <person name="Sherman F."/>
            <person name="Gevaert K."/>
            <person name="Aldabe R."/>
        </authorList>
    </citation>
    <scope>IDENTIFICATION BY MASS SPECTROMETRY [LARGE SCALE ANALYSIS]</scope>
</reference>
<reference key="17">
    <citation type="journal article" date="2013" name="J. Proteome Res.">
        <title>Toward a comprehensive characterization of a human cancer cell phosphoproteome.</title>
        <authorList>
            <person name="Zhou H."/>
            <person name="Di Palma S."/>
            <person name="Preisinger C."/>
            <person name="Peng M."/>
            <person name="Polat A.N."/>
            <person name="Heck A.J."/>
            <person name="Mohammed S."/>
        </authorList>
    </citation>
    <scope>PHOSPHORYLATION [LARGE SCALE ANALYSIS] AT SER-71</scope>
    <scope>IDENTIFICATION BY MASS SPECTROMETRY [LARGE SCALE ANALYSIS]</scope>
    <source>
        <tissue>Cervix carcinoma</tissue>
    </source>
</reference>
<reference key="18">
    <citation type="journal article" date="2015" name="Hum. Mol. Genet.">
        <title>Biochemical and cellular analysis of Ogden syndrome reveals downstream Nt-acetylation defects.</title>
        <authorList>
            <person name="Myklebust L.M."/>
            <person name="Van Damme P."/>
            <person name="Stoeve S.I."/>
            <person name="Doerfel M.J."/>
            <person name="Abboud A."/>
            <person name="Kalvik T.V."/>
            <person name="Grauffel C."/>
            <person name="Jonckheere V."/>
            <person name="Wu Y."/>
            <person name="Swensen J."/>
            <person name="Kaasa H."/>
            <person name="Liszczak G."/>
            <person name="Marmorstein R."/>
            <person name="Reuter N."/>
            <person name="Lyon G.J."/>
            <person name="Gevaert K."/>
            <person name="Arnesen T."/>
        </authorList>
    </citation>
    <scope>ACETYLATION AT ALA-2</scope>
    <scope>CLEAVAGE OF INITIATOR METHIONINE</scope>
</reference>
<reference key="19">
    <citation type="journal article" date="2015" name="Proteomics">
        <title>N-terminome analysis of the human mitochondrial proteome.</title>
        <authorList>
            <person name="Vaca Jacome A.S."/>
            <person name="Rabilloud T."/>
            <person name="Schaeffer-Reiss C."/>
            <person name="Rompais M."/>
            <person name="Ayoub D."/>
            <person name="Lane L."/>
            <person name="Bairoch A."/>
            <person name="Van Dorsselaer A."/>
            <person name="Carapito C."/>
        </authorList>
    </citation>
    <scope>IDENTIFICATION BY MASS SPECTROMETRY [LARGE SCALE ANALYSIS]</scope>
</reference>
<reference key="20">
    <citation type="journal article" date="2023" name="Science">
        <title>Rab29-dependent asymmetrical activation of leucine-rich repeat kinase 2.</title>
        <authorList>
            <person name="Zhu H."/>
            <person name="Tonelli F."/>
            <person name="Turk M."/>
            <person name="Prescott A."/>
            <person name="Alessi D.R."/>
            <person name="Sun J."/>
        </authorList>
    </citation>
    <scope>FUNCTION</scope>
    <scope>INTERACTION WITH LRRK2</scope>
</reference>
<reference evidence="20 21" key="21">
    <citation type="journal article" date="2014" name="Dev. Cell">
        <title>VARP is recruited on to endosomes by direct interaction with retromer, where together they function in export to the cell surface.</title>
        <authorList>
            <person name="Hesketh G.G."/>
            <person name="Perez-Dorado I."/>
            <person name="Jackson L.P."/>
            <person name="Wartosch L."/>
            <person name="Schafer I.B."/>
            <person name="Gray S.R."/>
            <person name="McCoy A.J."/>
            <person name="Zeldin O.B."/>
            <person name="Garman E.F."/>
            <person name="Harbour M.E."/>
            <person name="Evans P.R."/>
            <person name="Seaman M.N."/>
            <person name="Luzio J.P."/>
            <person name="Owen D.J."/>
        </authorList>
    </citation>
    <scope>X-RAY CRYSTALLOGRAPHY (2.8 ANGSTROMS) OF 1-225 IN COMPLEX WITH MG(2+); GTP ANALOG AND ANKRD27</scope>
    <scope>MUTAGENESIS OF GLY-89; ASN-90; MET-91; ARG-93 AND VAL-94</scope>
    <scope>COFACTOR</scope>
    <scope>DOMAIN</scope>
</reference>
<reference key="22">
    <citation type="journal article" date="2024" name="Lancet Neurol.">
        <title>RAB32 Ser71Arg in autosomal dominant Parkinson's disease: linkage, association, and functional analyses.</title>
        <authorList>
            <consortium name="Global Parkinson's Genetics Program (GP2)"/>
            <person name="Gustavsson E.K."/>
            <person name="Follett J."/>
            <person name="Trinh J."/>
            <person name="Barodia S.K."/>
            <person name="Real R."/>
            <person name="Liu Z."/>
            <person name="Grant-Peters M."/>
            <person name="Fox J.D."/>
            <person name="Appel-Cresswell S."/>
            <person name="Stoessl A.J."/>
            <person name="Rajput A."/>
            <person name="Rajput A.H."/>
            <person name="Auer R."/>
            <person name="Tilney R."/>
            <person name="Sturm M."/>
            <person name="Haack T.B."/>
            <person name="Lesage S."/>
            <person name="Tesson C."/>
            <person name="Brice A."/>
            <person name="Vilarino-Gueell C."/>
            <person name="Ryten M."/>
            <person name="Goldberg M.S."/>
            <person name="West A.B."/>
            <person name="Hu M.T."/>
            <person name="Morris H.R."/>
            <person name="Sharma M."/>
            <person name="Gan-Or Z."/>
            <person name="Samanci B."/>
            <person name="Lis P."/>
            <person name="Perinan M.T."/>
            <person name="Amouri R."/>
            <person name="Ben Sassi S."/>
            <person name="Hentati F."/>
            <person name="Tonelli F."/>
            <person name="Alessi D.R."/>
            <person name="Farrer M.J."/>
        </authorList>
    </citation>
    <scope>VARIANT ARG-71</scope>
    <scope>INVOLVEMENT IN PARK26</scope>
</reference>
<reference key="23">
    <citation type="journal article" date="2024" name="Nat. Genet.">
        <title>Systematic rare variant analyses identify RAB32 as a susceptibility gene for familial Parkinson's disease.</title>
        <authorList>
            <consortium name="Project MinE ALS Sequencing Consortium"/>
            <person name="Hop P.J."/>
            <person name="Lai D."/>
            <person name="Keagle P.J."/>
            <person name="Baron D.M."/>
            <person name="Kenna B.J."/>
            <person name="Kooyman M."/>
            <person name="Halter C."/>
            <person name="Straniero L."/>
            <person name="Asselta R."/>
            <person name="Bonvegna S."/>
            <person name="Soto-Beasley A.I."/>
            <person name="Wszolek Z.K."/>
            <person name="Uitti R.J."/>
            <person name="Isaias I.U."/>
            <person name="Pezzoli G."/>
            <person name="Ticozzi N."/>
            <person name="Ross O.A."/>
            <person name="Veldink J.H."/>
            <person name="Foroud T.M."/>
            <person name="Kenna K.P."/>
            <person name="Landers J.E."/>
        </authorList>
    </citation>
    <scope>VARIANT ARG-71</scope>
    <scope>INVOLVEMENT IN PARK26</scope>
    <scope>INTERACTION WITH LRRK2</scope>
    <scope>CHARACTERIZATION OF VARIANT ARG-71</scope>
</reference>
<sequence>MAGGGAGDPGLGAAAAPAPETREHLFKVLVIGELGVGKTSIIKRYVHQLFSQHYRATIGVDFALKVLNWDSRTLVRLQLWDIAGQERFGNMTRVYYKEAVGAFVVFDISRSSTFEAVLKWKSDLDSKVHLPNGSPIPAVLLANKCDQNKDSSQSPSQVDQFCKEHGFAGWFETSAKDNINIEEAARFLVEKILVNHQSFPNEENDVDKIKLDQETLRAENKSQCC</sequence>
<accession>Q13637</accession>
<comment type="function">
    <text evidence="2 3 4 5 6 7 10">The small GTPases Rab are key regulators of intracellular membrane trafficking, from the formation of transport vesicles to their fusion with membranes (PubMed:11784320, PubMed:21808068). Rabs cycle between an inactive GDP-bound form and an active GTP-bound form that is able to recruit to membranes different set of downstream effectors directly responsible for vesicle formation, movement, tethering and fusion (PubMed:11784320). Also acts as an A-kinase anchoring protein by binding to the type II regulatory subunit of protein kinase A and anchoring it to the mitochondrion. Also involved in synchronization of mitochondrial fission (PubMed:12186851). Plays a role in the maturation of phagosomes that engulf pathogens, such as S.aureus and M.tuberculosis (PubMed:21255211). Plays an important role in the control of melanin production and melanosome biogenesis (PubMed:23084991). In concert with RAB38, regulates the proper trafficking of melanogenic enzymes TYR, TYRP1 and DCT/TYRP2 to melanosomes in melanocytes (By similarity). Stimulates phosphorylation of RAB10 'Thr-73' by LRRK2 (PubMed:38127736).</text>
</comment>
<comment type="catalytic activity">
    <reaction evidence="3 6">
        <text>GTP + H2O = GDP + phosphate + H(+)</text>
        <dbReference type="Rhea" id="RHEA:19669"/>
        <dbReference type="ChEBI" id="CHEBI:15377"/>
        <dbReference type="ChEBI" id="CHEBI:15378"/>
        <dbReference type="ChEBI" id="CHEBI:37565"/>
        <dbReference type="ChEBI" id="CHEBI:43474"/>
        <dbReference type="ChEBI" id="CHEBI:58189"/>
        <dbReference type="EC" id="3.6.5.2"/>
    </reaction>
    <physiologicalReaction direction="left-to-right" evidence="15 17">
        <dbReference type="Rhea" id="RHEA:19670"/>
    </physiologicalReaction>
</comment>
<comment type="cofactor">
    <cofactor evidence="8">
        <name>Mg(2+)</name>
        <dbReference type="ChEBI" id="CHEBI:18420"/>
    </cofactor>
</comment>
<comment type="activity regulation">
    <text evidence="6 7 14">Regulated by guanine the nucleotide exchange factor (GEF) BLOC-3 complex composed of HPS1 and HPS4 which promote the exchange of bound GDP for free GTP (PubMed:23084991). Regulated by the GTPase activating protein (GAP) SGSM2/RUTBC1 which increases the GTP hydrolysis activity (PubMed:21808068). Inhibited by GDP dissociation inhibitors (GDIs) which prevent Rab-GDP dissociation (Probable).</text>
</comment>
<comment type="subunit">
    <text evidence="8 10 12">Interacts with ANKRD27 (PubMed:21269460, PubMed:24856514). A decreased interaction with ANKRD27 seen in the presence of SGSM2 (PubMed:21269460). Interacts with LRRK2 (via N-terminus); this interaction results in stimulation of RAB10 phosphorylation by LRRK2 (PubMed:38127736, PubMed:38858457).</text>
</comment>
<comment type="interaction">
    <interactant intactId="EBI-9837586">
        <id>Q13637</id>
    </interactant>
    <interactant intactId="EBI-742054">
        <id>Q96D03</id>
        <label>DDIT4L</label>
    </interactant>
    <organismsDiffer>false</organismsDiffer>
    <experiments>3</experiments>
</comment>
<comment type="interaction">
    <interactant intactId="EBI-9837586">
        <id>Q13637</id>
    </interactant>
    <interactant intactId="EBI-18393842">
        <id>A0A087WWI0</id>
        <label>LRMDA</label>
    </interactant>
    <organismsDiffer>false</organismsDiffer>
    <experiments>3</experiments>
</comment>
<comment type="interaction">
    <interactant intactId="EBI-9837586">
        <id>Q13637</id>
    </interactant>
    <interactant intactId="EBI-5323863">
        <id>Q5S007</id>
        <label>LRRK2</label>
    </interactant>
    <organismsDiffer>false</organismsDiffer>
    <experiments>12</experiments>
</comment>
<comment type="subcellular location">
    <subcellularLocation>
        <location evidence="4">Mitochondrion</location>
    </subcellularLocation>
    <subcellularLocation>
        <location evidence="7 16">Mitochondrion outer membrane</location>
        <topology evidence="16">Lipid-anchor</topology>
    </subcellularLocation>
    <subcellularLocation>
        <location evidence="5">Cytoplasmic vesicle</location>
        <location evidence="5">Phagosome</location>
    </subcellularLocation>
    <subcellularLocation>
        <location evidence="14">Cytoplasmic vesicle</location>
        <location evidence="14">Phagosome membrane</location>
        <topology evidence="14">Lipid-anchor</topology>
        <orientation evidence="14">Cytoplasmic side</orientation>
    </subcellularLocation>
    <subcellularLocation>
        <location evidence="2">Melanosome</location>
    </subcellularLocation>
    <subcellularLocation>
        <location evidence="7">Melanosome membrane</location>
    </subcellularLocation>
    <text evidence="5 7">Recruited to phagosomes containing S.aureus or M.tuberculosis (PubMed:21255211). The BLOC-3 complex, a heterodimer of HPS1 and HPS4 promotes its membrane localization (PubMed:23084991).</text>
</comment>
<comment type="tissue specificity">
    <text evidence="3 4">Widely expressed with high levels in heart, liver, kidney, bone marrow, testis, colon and fetal lung.</text>
</comment>
<comment type="domain">
    <text evidence="8">Switch 1, switch 2 and the interswitch regions are characteristic of Rab GTPases and mediate the interactions with Rab downstream effectors. The switch regions undergo conformational changes upon nucleotide binding which drive interaction with specific sets of effector proteins, with most effectors only binding to GTP-bound Rab.</text>
</comment>
<comment type="disease" evidence="11 12">
    <disease id="DI-06928">
        <name>Parkinson disease 26, autosomal dominant</name>
        <acronym>PARK26</acronym>
        <description>An autosomal dominant form of Parkinson disease, a complex neurodegenerative disorder characterized by bradykinesia, resting tremor, muscular rigidity and postural instability, as well as by a clinically significant response to treatment with levodopa. The pathology involves the loss of dopaminergic neurons in the substantia nigra and the presence of Lewy bodies (intraneuronal accumulations of aggregated proteins), in surviving neurons in various areas of the brain. PARK26 shows incomplete penetrance.</description>
        <dbReference type="MIM" id="620923"/>
    </disease>
    <text>Disease susceptibility is associated with variants affecting the gene represented in this entry.</text>
</comment>
<comment type="similarity">
    <text evidence="14">Belongs to the small GTPase superfamily. Rab family.</text>
</comment>
<dbReference type="EC" id="3.6.5.2" evidence="3 6"/>
<dbReference type="EMBL" id="U71127">
    <property type="protein sequence ID" value="AAB09599.1"/>
    <property type="molecule type" value="mRNA"/>
</dbReference>
<dbReference type="EMBL" id="AF498958">
    <property type="protein sequence ID" value="AAM21106.1"/>
    <property type="molecule type" value="mRNA"/>
</dbReference>
<dbReference type="EMBL" id="BT020016">
    <property type="protein sequence ID" value="AAV38819.1"/>
    <property type="molecule type" value="mRNA"/>
</dbReference>
<dbReference type="EMBL" id="AL133539">
    <property type="status" value="NOT_ANNOTATED_CDS"/>
    <property type="molecule type" value="Genomic_DNA"/>
</dbReference>
<dbReference type="EMBL" id="BC015061">
    <property type="protein sequence ID" value="AAH15061.1"/>
    <property type="molecule type" value="mRNA"/>
</dbReference>
<dbReference type="EMBL" id="U59878">
    <property type="protein sequence ID" value="AAB02833.1"/>
    <property type="molecule type" value="mRNA"/>
</dbReference>
<dbReference type="CCDS" id="CCDS5210.1"/>
<dbReference type="RefSeq" id="NP_006825.1">
    <property type="nucleotide sequence ID" value="NM_006834.5"/>
</dbReference>
<dbReference type="PDB" id="4CYM">
    <property type="method" value="X-ray"/>
    <property type="resolution" value="2.80 A"/>
    <property type="chains" value="A/B/C=1-225"/>
</dbReference>
<dbReference type="PDB" id="4CZ2">
    <property type="method" value="X-ray"/>
    <property type="resolution" value="2.97 A"/>
    <property type="chains" value="A/B/C=1-225"/>
</dbReference>
<dbReference type="PDB" id="5OEC">
    <property type="method" value="X-ray"/>
    <property type="resolution" value="2.30 A"/>
    <property type="chains" value="B=20-201"/>
</dbReference>
<dbReference type="PDB" id="5OED">
    <property type="method" value="X-ray"/>
    <property type="resolution" value="2.90 A"/>
    <property type="chains" value="B=20-201"/>
</dbReference>
<dbReference type="PDB" id="6FF8">
    <property type="method" value="X-ray"/>
    <property type="resolution" value="2.13 A"/>
    <property type="chains" value="A/B=20-198"/>
</dbReference>
<dbReference type="PDBsum" id="4CYM"/>
<dbReference type="PDBsum" id="4CZ2"/>
<dbReference type="PDBsum" id="5OEC"/>
<dbReference type="PDBsum" id="5OED"/>
<dbReference type="PDBsum" id="6FF8"/>
<dbReference type="SMR" id="Q13637"/>
<dbReference type="BioGRID" id="116177">
    <property type="interactions" value="77"/>
</dbReference>
<dbReference type="DIP" id="DIP-61889N"/>
<dbReference type="FunCoup" id="Q13637">
    <property type="interactions" value="968"/>
</dbReference>
<dbReference type="IntAct" id="Q13637">
    <property type="interactions" value="52"/>
</dbReference>
<dbReference type="MINT" id="Q13637"/>
<dbReference type="STRING" id="9606.ENSP00000356465"/>
<dbReference type="TCDB" id="8.A.248.1.5">
    <property type="family name" value="the ras-related rab gtpase (rrrg) family"/>
</dbReference>
<dbReference type="GlyGen" id="Q13637">
    <property type="glycosylation" value="1 site, 1 O-linked glycan (1 site)"/>
</dbReference>
<dbReference type="iPTMnet" id="Q13637"/>
<dbReference type="PhosphoSitePlus" id="Q13637"/>
<dbReference type="BioMuta" id="RAB32"/>
<dbReference type="DMDM" id="2833245"/>
<dbReference type="jPOST" id="Q13637"/>
<dbReference type="MassIVE" id="Q13637"/>
<dbReference type="PaxDb" id="9606-ENSP00000356465"/>
<dbReference type="PeptideAtlas" id="Q13637"/>
<dbReference type="ProteomicsDB" id="59632"/>
<dbReference type="Pumba" id="Q13637"/>
<dbReference type="Antibodypedia" id="19849">
    <property type="antibodies" value="176 antibodies from 29 providers"/>
</dbReference>
<dbReference type="DNASU" id="10981"/>
<dbReference type="Ensembl" id="ENST00000367495.4">
    <property type="protein sequence ID" value="ENSP00000356465.3"/>
    <property type="gene ID" value="ENSG00000118508.5"/>
</dbReference>
<dbReference type="GeneID" id="10981"/>
<dbReference type="KEGG" id="hsa:10981"/>
<dbReference type="MANE-Select" id="ENST00000367495.4">
    <property type="protein sequence ID" value="ENSP00000356465.3"/>
    <property type="RefSeq nucleotide sequence ID" value="NM_006834.5"/>
    <property type="RefSeq protein sequence ID" value="NP_006825.1"/>
</dbReference>
<dbReference type="UCSC" id="uc003qln.2">
    <property type="organism name" value="human"/>
</dbReference>
<dbReference type="AGR" id="HGNC:9772"/>
<dbReference type="CTD" id="10981"/>
<dbReference type="DisGeNET" id="10981"/>
<dbReference type="GeneCards" id="RAB32"/>
<dbReference type="HGNC" id="HGNC:9772">
    <property type="gene designation" value="RAB32"/>
</dbReference>
<dbReference type="HPA" id="ENSG00000118508">
    <property type="expression patterns" value="Tissue enhanced (bone)"/>
</dbReference>
<dbReference type="MalaCards" id="RAB32"/>
<dbReference type="MIM" id="612906">
    <property type="type" value="gene"/>
</dbReference>
<dbReference type="MIM" id="620923">
    <property type="type" value="phenotype"/>
</dbReference>
<dbReference type="neXtProt" id="NX_Q13637"/>
<dbReference type="OpenTargets" id="ENSG00000118508"/>
<dbReference type="PharmGKB" id="PA34123"/>
<dbReference type="VEuPathDB" id="HostDB:ENSG00000118508"/>
<dbReference type="eggNOG" id="KOG4423">
    <property type="taxonomic scope" value="Eukaryota"/>
</dbReference>
<dbReference type="GeneTree" id="ENSGT00940000162477"/>
<dbReference type="HOGENOM" id="CLU_041217_10_6_1"/>
<dbReference type="InParanoid" id="Q13637"/>
<dbReference type="OMA" id="ARRKLCC"/>
<dbReference type="OrthoDB" id="245989at2759"/>
<dbReference type="PAN-GO" id="Q13637">
    <property type="GO annotations" value="7 GO annotations based on evolutionary models"/>
</dbReference>
<dbReference type="PhylomeDB" id="Q13637"/>
<dbReference type="TreeFam" id="TF324491"/>
<dbReference type="PathwayCommons" id="Q13637"/>
<dbReference type="Reactome" id="R-HSA-8873719">
    <property type="pathway name" value="RAB geranylgeranylation"/>
</dbReference>
<dbReference type="Reactome" id="R-HSA-8876198">
    <property type="pathway name" value="RAB GEFs exchange GTP for GDP on RABs"/>
</dbReference>
<dbReference type="SignaLink" id="Q13637"/>
<dbReference type="SIGNOR" id="Q13637"/>
<dbReference type="BioGRID-ORCS" id="10981">
    <property type="hits" value="10 hits in 1158 CRISPR screens"/>
</dbReference>
<dbReference type="EvolutionaryTrace" id="Q13637"/>
<dbReference type="GenomeRNAi" id="10981"/>
<dbReference type="Pharos" id="Q13637">
    <property type="development level" value="Tbio"/>
</dbReference>
<dbReference type="PRO" id="PR:Q13637"/>
<dbReference type="Proteomes" id="UP000005640">
    <property type="component" value="Chromosome 6"/>
</dbReference>
<dbReference type="RNAct" id="Q13637">
    <property type="molecule type" value="protein"/>
</dbReference>
<dbReference type="Bgee" id="ENSG00000118508">
    <property type="expression patterns" value="Expressed in monocyte and 159 other cell types or tissues"/>
</dbReference>
<dbReference type="GO" id="GO:0005829">
    <property type="term" value="C:cytosol"/>
    <property type="evidence" value="ECO:0000304"/>
    <property type="project" value="Reactome"/>
</dbReference>
<dbReference type="GO" id="GO:0005769">
    <property type="term" value="C:early endosome"/>
    <property type="evidence" value="ECO:0000314"/>
    <property type="project" value="ParkinsonsUK-UCL"/>
</dbReference>
<dbReference type="GO" id="GO:0012505">
    <property type="term" value="C:endomembrane system"/>
    <property type="evidence" value="ECO:0000318"/>
    <property type="project" value="GO_Central"/>
</dbReference>
<dbReference type="GO" id="GO:0005783">
    <property type="term" value="C:endoplasmic reticulum"/>
    <property type="evidence" value="ECO:0000314"/>
    <property type="project" value="ParkinsonsUK-UCL"/>
</dbReference>
<dbReference type="GO" id="GO:0042470">
    <property type="term" value="C:melanosome"/>
    <property type="evidence" value="ECO:0000314"/>
    <property type="project" value="ParkinsonsUK-UCL"/>
</dbReference>
<dbReference type="GO" id="GO:0033162">
    <property type="term" value="C:melanosome membrane"/>
    <property type="evidence" value="ECO:0000314"/>
    <property type="project" value="UniProtKB"/>
</dbReference>
<dbReference type="GO" id="GO:0016020">
    <property type="term" value="C:membrane"/>
    <property type="evidence" value="ECO:0000314"/>
    <property type="project" value="ParkinsonsUK-UCL"/>
</dbReference>
<dbReference type="GO" id="GO:0044233">
    <property type="term" value="C:mitochondria-associated endoplasmic reticulum membrane contact site"/>
    <property type="evidence" value="ECO:0000314"/>
    <property type="project" value="ParkinsonsUK-UCL"/>
</dbReference>
<dbReference type="GO" id="GO:0005741">
    <property type="term" value="C:mitochondrial outer membrane"/>
    <property type="evidence" value="ECO:0000314"/>
    <property type="project" value="UniProtKB"/>
</dbReference>
<dbReference type="GO" id="GO:0005739">
    <property type="term" value="C:mitochondrion"/>
    <property type="evidence" value="ECO:0000314"/>
    <property type="project" value="ParkinsonsUK-UCL"/>
</dbReference>
<dbReference type="GO" id="GO:0045335">
    <property type="term" value="C:phagocytic vesicle"/>
    <property type="evidence" value="ECO:0000314"/>
    <property type="project" value="UniProtKB"/>
</dbReference>
<dbReference type="GO" id="GO:0030670">
    <property type="term" value="C:phagocytic vesicle membrane"/>
    <property type="evidence" value="ECO:0007669"/>
    <property type="project" value="UniProtKB-SubCell"/>
</dbReference>
<dbReference type="GO" id="GO:0005802">
    <property type="term" value="C:trans-Golgi network"/>
    <property type="evidence" value="ECO:0000318"/>
    <property type="project" value="GO_Central"/>
</dbReference>
<dbReference type="GO" id="GO:0035650">
    <property type="term" value="F:AP-1 adaptor complex binding"/>
    <property type="evidence" value="ECO:0000353"/>
    <property type="project" value="ParkinsonsUK-UCL"/>
</dbReference>
<dbReference type="GO" id="GO:0035651">
    <property type="term" value="F:AP-3 adaptor complex binding"/>
    <property type="evidence" value="ECO:0000353"/>
    <property type="project" value="ParkinsonsUK-UCL"/>
</dbReference>
<dbReference type="GO" id="GO:0036461">
    <property type="term" value="F:BLOC-2 complex binding"/>
    <property type="evidence" value="ECO:0000353"/>
    <property type="project" value="ParkinsonsUK-UCL"/>
</dbReference>
<dbReference type="GO" id="GO:0005525">
    <property type="term" value="F:GTP binding"/>
    <property type="evidence" value="ECO:0000303"/>
    <property type="project" value="ParkinsonsUK-UCL"/>
</dbReference>
<dbReference type="GO" id="GO:0030742">
    <property type="term" value="F:GTP-dependent protein binding"/>
    <property type="evidence" value="ECO:0000353"/>
    <property type="project" value="ParkinsonsUK-UCL"/>
</dbReference>
<dbReference type="GO" id="GO:0003924">
    <property type="term" value="F:GTPase activity"/>
    <property type="evidence" value="ECO:0000314"/>
    <property type="project" value="UniProtKB"/>
</dbReference>
<dbReference type="GO" id="GO:0019882">
    <property type="term" value="P:antigen processing and presentation"/>
    <property type="evidence" value="ECO:0000315"/>
    <property type="project" value="UniProtKB"/>
</dbReference>
<dbReference type="GO" id="GO:0035646">
    <property type="term" value="P:endosome to melanosome transport"/>
    <property type="evidence" value="ECO:0000315"/>
    <property type="project" value="ParkinsonsUK-UCL"/>
</dbReference>
<dbReference type="GO" id="GO:0006886">
    <property type="term" value="P:intracellular protein transport"/>
    <property type="evidence" value="ECO:0000318"/>
    <property type="project" value="GO_Central"/>
</dbReference>
<dbReference type="GO" id="GO:1903232">
    <property type="term" value="P:melanosome assembly"/>
    <property type="evidence" value="ECO:0000314"/>
    <property type="project" value="UniProtKB"/>
</dbReference>
<dbReference type="GO" id="GO:0032438">
    <property type="term" value="P:melanosome organization"/>
    <property type="evidence" value="ECO:0000318"/>
    <property type="project" value="GO_Central"/>
</dbReference>
<dbReference type="GO" id="GO:0007005">
    <property type="term" value="P:mitochondrion organization"/>
    <property type="evidence" value="ECO:0000315"/>
    <property type="project" value="ParkinsonsUK-UCL"/>
</dbReference>
<dbReference type="GO" id="GO:0090382">
    <property type="term" value="P:phagosome maturation"/>
    <property type="evidence" value="ECO:0000315"/>
    <property type="project" value="UniProtKB"/>
</dbReference>
<dbReference type="GO" id="GO:0072657">
    <property type="term" value="P:protein localization to membrane"/>
    <property type="evidence" value="ECO:0000315"/>
    <property type="project" value="ParkinsonsUK-UCL"/>
</dbReference>
<dbReference type="GO" id="GO:0016192">
    <property type="term" value="P:vesicle-mediated transport"/>
    <property type="evidence" value="ECO:0007669"/>
    <property type="project" value="InterPro"/>
</dbReference>
<dbReference type="CDD" id="cd04107">
    <property type="entry name" value="Rab32_Rab38"/>
    <property type="match status" value="1"/>
</dbReference>
<dbReference type="FunFam" id="3.40.50.300:FF:000222">
    <property type="entry name" value="RAB32, member RAS oncogene family"/>
    <property type="match status" value="1"/>
</dbReference>
<dbReference type="Gene3D" id="3.40.50.300">
    <property type="entry name" value="P-loop containing nucleotide triphosphate hydrolases"/>
    <property type="match status" value="1"/>
</dbReference>
<dbReference type="InterPro" id="IPR027417">
    <property type="entry name" value="P-loop_NTPase"/>
</dbReference>
<dbReference type="InterPro" id="IPR030697">
    <property type="entry name" value="Rab29/Rab38/Rab32"/>
</dbReference>
<dbReference type="InterPro" id="IPR005225">
    <property type="entry name" value="Small_GTP-bd"/>
</dbReference>
<dbReference type="InterPro" id="IPR001806">
    <property type="entry name" value="Small_GTPase"/>
</dbReference>
<dbReference type="NCBIfam" id="TIGR00231">
    <property type="entry name" value="small_GTP"/>
    <property type="match status" value="1"/>
</dbReference>
<dbReference type="PANTHER" id="PTHR47981">
    <property type="entry name" value="RAB FAMILY"/>
    <property type="match status" value="1"/>
</dbReference>
<dbReference type="PANTHER" id="PTHR47981:SF41">
    <property type="entry name" value="RAS-RELATED PROTEIN RAB-32 ISOFORM X1"/>
    <property type="match status" value="1"/>
</dbReference>
<dbReference type="Pfam" id="PF00071">
    <property type="entry name" value="Ras"/>
    <property type="match status" value="1"/>
</dbReference>
<dbReference type="PRINTS" id="PR00449">
    <property type="entry name" value="RASTRNSFRMNG"/>
</dbReference>
<dbReference type="SMART" id="SM00175">
    <property type="entry name" value="RAB"/>
    <property type="match status" value="1"/>
</dbReference>
<dbReference type="SMART" id="SM00176">
    <property type="entry name" value="RAN"/>
    <property type="match status" value="1"/>
</dbReference>
<dbReference type="SMART" id="SM00173">
    <property type="entry name" value="RAS"/>
    <property type="match status" value="1"/>
</dbReference>
<dbReference type="SMART" id="SM00174">
    <property type="entry name" value="RHO"/>
    <property type="match status" value="1"/>
</dbReference>
<dbReference type="SUPFAM" id="SSF52540">
    <property type="entry name" value="P-loop containing nucleoside triphosphate hydrolases"/>
    <property type="match status" value="1"/>
</dbReference>
<dbReference type="PROSITE" id="PS51419">
    <property type="entry name" value="RAB"/>
    <property type="match status" value="1"/>
</dbReference>
<feature type="initiator methionine" description="Removed" evidence="9 13 22">
    <location>
        <position position="1"/>
    </location>
</feature>
<feature type="chain" id="PRO_0000121235" description="Ras-related protein Rab-32">
    <location>
        <begin position="2"/>
        <end position="225"/>
    </location>
</feature>
<feature type="region of interest" description="PKA-RII subunit binding domain">
    <location>
        <begin position="178"/>
        <end position="197"/>
    </location>
</feature>
<feature type="short sequence motif" description="Switch 1" evidence="8 20 21">
    <location>
        <begin position="48"/>
        <end position="62"/>
    </location>
</feature>
<feature type="short sequence motif" description="Switch 2" evidence="8 20 21">
    <location>
        <begin position="84"/>
        <end position="97"/>
    </location>
</feature>
<feature type="binding site" evidence="18 20 21">
    <location>
        <position position="36"/>
    </location>
    <ligand>
        <name>GTP</name>
        <dbReference type="ChEBI" id="CHEBI:37565"/>
    </ligand>
</feature>
<feature type="binding site" evidence="18 20 21">
    <location>
        <position position="37"/>
    </location>
    <ligand>
        <name>GTP</name>
        <dbReference type="ChEBI" id="CHEBI:37565"/>
    </ligand>
</feature>
<feature type="binding site" evidence="18 20 21">
    <location>
        <position position="38"/>
    </location>
    <ligand>
        <name>GTP</name>
        <dbReference type="ChEBI" id="CHEBI:37565"/>
    </ligand>
</feature>
<feature type="binding site" evidence="18 20 21">
    <location>
        <position position="39"/>
    </location>
    <ligand>
        <name>GTP</name>
        <dbReference type="ChEBI" id="CHEBI:37565"/>
    </ligand>
</feature>
<feature type="binding site" evidence="8 20 21">
    <location>
        <position position="39"/>
    </location>
    <ligand>
        <name>Mg(2+)</name>
        <dbReference type="ChEBI" id="CHEBI:18420"/>
    </ligand>
</feature>
<feature type="binding site" evidence="18 20 21">
    <location>
        <position position="40"/>
    </location>
    <ligand>
        <name>GTP</name>
        <dbReference type="ChEBI" id="CHEBI:37565"/>
    </ligand>
</feature>
<feature type="binding site" evidence="18 20 21">
    <location>
        <position position="51"/>
    </location>
    <ligand>
        <name>GTP</name>
        <dbReference type="ChEBI" id="CHEBI:37565"/>
    </ligand>
</feature>
<feature type="binding site" evidence="18 20 21">
    <location>
        <position position="52"/>
    </location>
    <ligand>
        <name>GTP</name>
        <dbReference type="ChEBI" id="CHEBI:37565"/>
    </ligand>
</feature>
<feature type="binding site" evidence="18 20 21">
    <location>
        <position position="54"/>
    </location>
    <ligand>
        <name>GTP</name>
        <dbReference type="ChEBI" id="CHEBI:37565"/>
    </ligand>
</feature>
<feature type="binding site" evidence="18 20 21">
    <location>
        <position position="57"/>
    </location>
    <ligand>
        <name>GTP</name>
        <dbReference type="ChEBI" id="CHEBI:37565"/>
    </ligand>
</feature>
<feature type="binding site" evidence="8 20 21">
    <location>
        <position position="57"/>
    </location>
    <ligand>
        <name>Mg(2+)</name>
        <dbReference type="ChEBI" id="CHEBI:18420"/>
    </ligand>
</feature>
<feature type="binding site" evidence="8 21">
    <location>
        <position position="81"/>
    </location>
    <ligand>
        <name>Mg(2+)</name>
        <dbReference type="ChEBI" id="CHEBI:18420"/>
    </ligand>
</feature>
<feature type="binding site" evidence="18 20 21">
    <location>
        <position position="84"/>
    </location>
    <ligand>
        <name>GTP</name>
        <dbReference type="ChEBI" id="CHEBI:37565"/>
    </ligand>
</feature>
<feature type="binding site" evidence="18 20 21">
    <location>
        <position position="143"/>
    </location>
    <ligand>
        <name>GTP</name>
        <dbReference type="ChEBI" id="CHEBI:37565"/>
    </ligand>
</feature>
<feature type="binding site" evidence="18 20 21">
    <location>
        <position position="144"/>
    </location>
    <ligand>
        <name>GTP</name>
        <dbReference type="ChEBI" id="CHEBI:37565"/>
    </ligand>
</feature>
<feature type="binding site" evidence="18 20 21">
    <location>
        <position position="146"/>
    </location>
    <ligand>
        <name>GTP</name>
        <dbReference type="ChEBI" id="CHEBI:37565"/>
    </ligand>
</feature>
<feature type="binding site" evidence="18 20 21">
    <location>
        <position position="175"/>
    </location>
    <ligand>
        <name>GTP</name>
        <dbReference type="ChEBI" id="CHEBI:37565"/>
    </ligand>
</feature>
<feature type="binding site" evidence="18 20 21">
    <location>
        <position position="176"/>
    </location>
    <ligand>
        <name>GTP</name>
        <dbReference type="ChEBI" id="CHEBI:37565"/>
    </ligand>
</feature>
<feature type="modified residue" description="N-acetylalanine" evidence="9 13 22">
    <location>
        <position position="2"/>
    </location>
</feature>
<feature type="modified residue" description="Phosphoserine" evidence="23">
    <location>
        <position position="71"/>
    </location>
</feature>
<feature type="lipid moiety-binding region" description="S-geranylgeranyl cysteine" evidence="1">
    <location>
        <position position="224"/>
    </location>
</feature>
<feature type="lipid moiety-binding region" description="S-geranylgeranyl cysteine" evidence="1">
    <location>
        <position position="225"/>
    </location>
</feature>
<feature type="sequence variant" id="VAR_089968" description="Risk factor for PARK26; increased interaction with LRRK2; dbSNP:rs200251693." evidence="11 12">
    <original>S</original>
    <variation>R</variation>
    <location>
        <position position="71"/>
    </location>
</feature>
<feature type="mutagenesis site" description="Decreased GTP-binding activity." evidence="4">
    <original>T</original>
    <variation>N</variation>
    <location>
        <position position="39"/>
    </location>
</feature>
<feature type="mutagenesis site" description="No change in GTPase activity." evidence="3">
    <original>Q</original>
    <variation>L</variation>
    <location>
        <position position="85"/>
    </location>
</feature>
<feature type="mutagenesis site" description="Impairs interaction with ANKRD27; when associated with S-90 and L-94." evidence="8">
    <original>G</original>
    <variation>T</variation>
    <location>
        <position position="89"/>
    </location>
</feature>
<feature type="mutagenesis site" description="Impairs interaction with ANKRD27; when associated with T-89 and L-94." evidence="8">
    <original>N</original>
    <variation>S</variation>
    <location>
        <position position="90"/>
    </location>
</feature>
<feature type="mutagenesis site" description="Impairs interaction with ANKRD27; when associated with S-93." evidence="8">
    <original>M</original>
    <variation>S</variation>
    <location>
        <position position="91"/>
    </location>
</feature>
<feature type="mutagenesis site" description="Impairs interaction with ANKRD27; when associated with M-91." evidence="8">
    <original>R</original>
    <variation>S</variation>
    <location>
        <position position="93"/>
    </location>
</feature>
<feature type="mutagenesis site" description="Impairs interaction with ANKRD27; when associated with T-89 and S-90." evidence="8">
    <original>V</original>
    <variation>L</variation>
    <location>
        <position position="94"/>
    </location>
</feature>
<feature type="mutagenesis site" description="Abolishes binding to protein kinase A type II regulatory subunit." evidence="4">
    <original>A</original>
    <variation>F</variation>
    <location>
        <position position="185"/>
    </location>
</feature>
<feature type="mutagenesis site" description="Abolishes binding to protein kinase A type II regulatory subunit." evidence="4">
    <original>L</original>
    <variation>P</variation>
    <location>
        <position position="188"/>
    </location>
</feature>
<feature type="strand" evidence="24">
    <location>
        <begin position="22"/>
        <end position="33"/>
    </location>
</feature>
<feature type="helix" evidence="24">
    <location>
        <begin position="38"/>
        <end position="47"/>
    </location>
</feature>
<feature type="strand" evidence="24">
    <location>
        <begin position="59"/>
        <end position="70"/>
    </location>
</feature>
<feature type="strand" evidence="24">
    <location>
        <begin position="73"/>
        <end position="82"/>
    </location>
</feature>
<feature type="helix" evidence="24">
    <location>
        <begin position="84"/>
        <end position="88"/>
    </location>
</feature>
<feature type="helix" evidence="24">
    <location>
        <begin position="92"/>
        <end position="96"/>
    </location>
</feature>
<feature type="strand" evidence="24">
    <location>
        <begin position="101"/>
        <end position="107"/>
    </location>
</feature>
<feature type="helix" evidence="24">
    <location>
        <begin position="111"/>
        <end position="127"/>
    </location>
</feature>
<feature type="strand" evidence="24">
    <location>
        <begin position="133"/>
        <end position="135"/>
    </location>
</feature>
<feature type="strand" evidence="24">
    <location>
        <begin position="138"/>
        <end position="143"/>
    </location>
</feature>
<feature type="helix" evidence="24">
    <location>
        <begin position="155"/>
        <end position="165"/>
    </location>
</feature>
<feature type="strand" evidence="24">
    <location>
        <begin position="168"/>
        <end position="174"/>
    </location>
</feature>
<feature type="turn" evidence="24">
    <location>
        <begin position="175"/>
        <end position="178"/>
    </location>
</feature>
<feature type="helix" evidence="24">
    <location>
        <begin position="181"/>
        <end position="197"/>
    </location>
</feature>
<gene>
    <name evidence="19" type="primary">RAB32</name>
</gene>